<proteinExistence type="inferred from homology"/>
<sequence>MLLTLLKCKLHKATVTHSELEYEGSCAIDGDLLDAAGILPYEQIQIYNIANGERFTTYAIRAEAGSRVISVNGAAAHKANPGDRVIICAYGQLPREEAARFHPRLVYLDADNRIVRTGSDIPVQAA</sequence>
<feature type="chain" id="PRO_1000135232" description="Aspartate 1-decarboxylase beta chain" evidence="1">
    <location>
        <begin position="1"/>
        <end position="24"/>
    </location>
</feature>
<feature type="chain" id="PRO_1000135233" description="Aspartate 1-decarboxylase alpha chain" evidence="1">
    <location>
        <begin position="25"/>
        <end position="126"/>
    </location>
</feature>
<feature type="active site" description="Schiff-base intermediate with substrate; via pyruvic acid" evidence="1">
    <location>
        <position position="25"/>
    </location>
</feature>
<feature type="active site" description="Proton donor" evidence="1">
    <location>
        <position position="58"/>
    </location>
</feature>
<feature type="binding site" evidence="1">
    <location>
        <position position="57"/>
    </location>
    <ligand>
        <name>substrate</name>
    </ligand>
</feature>
<feature type="binding site" evidence="1">
    <location>
        <begin position="73"/>
        <end position="75"/>
    </location>
    <ligand>
        <name>substrate</name>
    </ligand>
</feature>
<feature type="modified residue" description="Pyruvic acid (Ser)" evidence="1">
    <location>
        <position position="25"/>
    </location>
</feature>
<organism>
    <name type="scientific">Thioalkalivibrio sulfidiphilus (strain HL-EbGR7)</name>
    <dbReference type="NCBI Taxonomy" id="396588"/>
    <lineage>
        <taxon>Bacteria</taxon>
        <taxon>Pseudomonadati</taxon>
        <taxon>Pseudomonadota</taxon>
        <taxon>Gammaproteobacteria</taxon>
        <taxon>Chromatiales</taxon>
        <taxon>Ectothiorhodospiraceae</taxon>
        <taxon>Thioalkalivibrio</taxon>
    </lineage>
</organism>
<keyword id="KW-0068">Autocatalytic cleavage</keyword>
<keyword id="KW-0963">Cytoplasm</keyword>
<keyword id="KW-0210">Decarboxylase</keyword>
<keyword id="KW-0456">Lyase</keyword>
<keyword id="KW-0566">Pantothenate biosynthesis</keyword>
<keyword id="KW-0670">Pyruvate</keyword>
<keyword id="KW-1185">Reference proteome</keyword>
<keyword id="KW-0704">Schiff base</keyword>
<keyword id="KW-0865">Zymogen</keyword>
<reference key="1">
    <citation type="journal article" date="2011" name="Stand. Genomic Sci.">
        <title>Complete genome sequence of 'Thioalkalivibrio sulfidophilus' HL-EbGr7.</title>
        <authorList>
            <person name="Muyzer G."/>
            <person name="Sorokin D.Y."/>
            <person name="Mavromatis K."/>
            <person name="Lapidus A."/>
            <person name="Clum A."/>
            <person name="Ivanova N."/>
            <person name="Pati A."/>
            <person name="d'Haeseleer P."/>
            <person name="Woyke T."/>
            <person name="Kyrpides N.C."/>
        </authorList>
    </citation>
    <scope>NUCLEOTIDE SEQUENCE [LARGE SCALE GENOMIC DNA]</scope>
    <source>
        <strain>HL-EbGR7</strain>
    </source>
</reference>
<name>PAND_THISH</name>
<protein>
    <recommendedName>
        <fullName evidence="1">Aspartate 1-decarboxylase</fullName>
        <ecNumber evidence="1">4.1.1.11</ecNumber>
    </recommendedName>
    <alternativeName>
        <fullName evidence="1">Aspartate alpha-decarboxylase</fullName>
    </alternativeName>
    <component>
        <recommendedName>
            <fullName evidence="1">Aspartate 1-decarboxylase beta chain</fullName>
        </recommendedName>
    </component>
    <component>
        <recommendedName>
            <fullName evidence="1">Aspartate 1-decarboxylase alpha chain</fullName>
        </recommendedName>
    </component>
</protein>
<evidence type="ECO:0000255" key="1">
    <source>
        <dbReference type="HAMAP-Rule" id="MF_00446"/>
    </source>
</evidence>
<comment type="function">
    <text evidence="1">Catalyzes the pyruvoyl-dependent decarboxylation of aspartate to produce beta-alanine.</text>
</comment>
<comment type="catalytic activity">
    <reaction evidence="1">
        <text>L-aspartate + H(+) = beta-alanine + CO2</text>
        <dbReference type="Rhea" id="RHEA:19497"/>
        <dbReference type="ChEBI" id="CHEBI:15378"/>
        <dbReference type="ChEBI" id="CHEBI:16526"/>
        <dbReference type="ChEBI" id="CHEBI:29991"/>
        <dbReference type="ChEBI" id="CHEBI:57966"/>
        <dbReference type="EC" id="4.1.1.11"/>
    </reaction>
</comment>
<comment type="cofactor">
    <cofactor evidence="1">
        <name>pyruvate</name>
        <dbReference type="ChEBI" id="CHEBI:15361"/>
    </cofactor>
    <text evidence="1">Binds 1 pyruvoyl group covalently per subunit.</text>
</comment>
<comment type="pathway">
    <text evidence="1">Cofactor biosynthesis; (R)-pantothenate biosynthesis; beta-alanine from L-aspartate: step 1/1.</text>
</comment>
<comment type="subunit">
    <text evidence="1">Heterooctamer of four alpha and four beta subunits.</text>
</comment>
<comment type="subcellular location">
    <subcellularLocation>
        <location evidence="1">Cytoplasm</location>
    </subcellularLocation>
</comment>
<comment type="PTM">
    <text evidence="1">Is synthesized initially as an inactive proenzyme, which is activated by self-cleavage at a specific serine bond to produce a beta-subunit with a hydroxyl group at its C-terminus and an alpha-subunit with a pyruvoyl group at its N-terminus.</text>
</comment>
<comment type="similarity">
    <text evidence="1">Belongs to the PanD family.</text>
</comment>
<gene>
    <name evidence="1" type="primary">panD</name>
    <name type="ordered locus">Tgr7_0877</name>
</gene>
<accession>B8GNA7</accession>
<dbReference type="EC" id="4.1.1.11" evidence="1"/>
<dbReference type="EMBL" id="CP001339">
    <property type="protein sequence ID" value="ACL71968.1"/>
    <property type="molecule type" value="Genomic_DNA"/>
</dbReference>
<dbReference type="RefSeq" id="WP_012637456.1">
    <property type="nucleotide sequence ID" value="NC_011901.1"/>
</dbReference>
<dbReference type="SMR" id="B8GNA7"/>
<dbReference type="STRING" id="396588.Tgr7_0877"/>
<dbReference type="KEGG" id="tgr:Tgr7_0877"/>
<dbReference type="eggNOG" id="COG0853">
    <property type="taxonomic scope" value="Bacteria"/>
</dbReference>
<dbReference type="HOGENOM" id="CLU_115305_2_1_6"/>
<dbReference type="OrthoDB" id="9803983at2"/>
<dbReference type="UniPathway" id="UPA00028">
    <property type="reaction ID" value="UER00002"/>
</dbReference>
<dbReference type="Proteomes" id="UP000002383">
    <property type="component" value="Chromosome"/>
</dbReference>
<dbReference type="GO" id="GO:0005829">
    <property type="term" value="C:cytosol"/>
    <property type="evidence" value="ECO:0007669"/>
    <property type="project" value="TreeGrafter"/>
</dbReference>
<dbReference type="GO" id="GO:0004068">
    <property type="term" value="F:aspartate 1-decarboxylase activity"/>
    <property type="evidence" value="ECO:0007669"/>
    <property type="project" value="UniProtKB-UniRule"/>
</dbReference>
<dbReference type="GO" id="GO:0006523">
    <property type="term" value="P:alanine biosynthetic process"/>
    <property type="evidence" value="ECO:0007669"/>
    <property type="project" value="InterPro"/>
</dbReference>
<dbReference type="GO" id="GO:0015940">
    <property type="term" value="P:pantothenate biosynthetic process"/>
    <property type="evidence" value="ECO:0007669"/>
    <property type="project" value="UniProtKB-UniRule"/>
</dbReference>
<dbReference type="CDD" id="cd06919">
    <property type="entry name" value="Asp_decarbox"/>
    <property type="match status" value="1"/>
</dbReference>
<dbReference type="Gene3D" id="2.40.40.20">
    <property type="match status" value="1"/>
</dbReference>
<dbReference type="HAMAP" id="MF_00446">
    <property type="entry name" value="PanD"/>
    <property type="match status" value="1"/>
</dbReference>
<dbReference type="InterPro" id="IPR009010">
    <property type="entry name" value="Asp_de-COase-like_dom_sf"/>
</dbReference>
<dbReference type="InterPro" id="IPR003190">
    <property type="entry name" value="Asp_decarbox"/>
</dbReference>
<dbReference type="NCBIfam" id="TIGR00223">
    <property type="entry name" value="panD"/>
    <property type="match status" value="1"/>
</dbReference>
<dbReference type="PANTHER" id="PTHR21012">
    <property type="entry name" value="ASPARTATE 1-DECARBOXYLASE"/>
    <property type="match status" value="1"/>
</dbReference>
<dbReference type="PANTHER" id="PTHR21012:SF0">
    <property type="entry name" value="ASPARTATE 1-DECARBOXYLASE"/>
    <property type="match status" value="1"/>
</dbReference>
<dbReference type="Pfam" id="PF02261">
    <property type="entry name" value="Asp_decarbox"/>
    <property type="match status" value="1"/>
</dbReference>
<dbReference type="PIRSF" id="PIRSF006246">
    <property type="entry name" value="Asp_decarbox"/>
    <property type="match status" value="1"/>
</dbReference>
<dbReference type="SUPFAM" id="SSF50692">
    <property type="entry name" value="ADC-like"/>
    <property type="match status" value="1"/>
</dbReference>